<keyword id="KW-0413">Isomerase</keyword>
<keyword id="KW-0819">tRNA processing</keyword>
<evidence type="ECO:0000255" key="1">
    <source>
        <dbReference type="HAMAP-Rule" id="MF_00171"/>
    </source>
</evidence>
<protein>
    <recommendedName>
        <fullName evidence="1">tRNA pseudouridine synthase A</fullName>
        <ecNumber evidence="1">5.4.99.12</ecNumber>
    </recommendedName>
    <alternativeName>
        <fullName evidence="1">tRNA pseudouridine(38-40) synthase</fullName>
    </alternativeName>
    <alternativeName>
        <fullName evidence="1">tRNA pseudouridylate synthase I</fullName>
    </alternativeName>
    <alternativeName>
        <fullName evidence="1">tRNA-uridine isomerase I</fullName>
    </alternativeName>
</protein>
<reference key="1">
    <citation type="journal article" date="2007" name="PLoS Genet.">
        <title>The complete genome sequence of Yersinia pseudotuberculosis IP31758, the causative agent of Far East scarlet-like fever.</title>
        <authorList>
            <person name="Eppinger M."/>
            <person name="Rosovitz M.J."/>
            <person name="Fricke W.F."/>
            <person name="Rasko D.A."/>
            <person name="Kokorina G."/>
            <person name="Fayolle C."/>
            <person name="Lindler L.E."/>
            <person name="Carniel E."/>
            <person name="Ravel J."/>
        </authorList>
    </citation>
    <scope>NUCLEOTIDE SEQUENCE [LARGE SCALE GENOMIC DNA]</scope>
    <source>
        <strain>IP 31758</strain>
    </source>
</reference>
<comment type="function">
    <text evidence="1">Formation of pseudouridine at positions 38, 39 and 40 in the anticodon stem and loop of transfer RNAs.</text>
</comment>
<comment type="catalytic activity">
    <reaction evidence="1">
        <text>uridine(38/39/40) in tRNA = pseudouridine(38/39/40) in tRNA</text>
        <dbReference type="Rhea" id="RHEA:22376"/>
        <dbReference type="Rhea" id="RHEA-COMP:10085"/>
        <dbReference type="Rhea" id="RHEA-COMP:10087"/>
        <dbReference type="ChEBI" id="CHEBI:65314"/>
        <dbReference type="ChEBI" id="CHEBI:65315"/>
        <dbReference type="EC" id="5.4.99.12"/>
    </reaction>
</comment>
<comment type="subunit">
    <text evidence="1">Homodimer.</text>
</comment>
<comment type="similarity">
    <text evidence="1">Belongs to the tRNA pseudouridine synthase TruA family.</text>
</comment>
<accession>A7FGM1</accession>
<gene>
    <name evidence="1" type="primary">truA</name>
    <name type="ordered locus">YpsIP31758_1420</name>
</gene>
<feature type="chain" id="PRO_1000058311" description="tRNA pseudouridine synthase A">
    <location>
        <begin position="1"/>
        <end position="264"/>
    </location>
</feature>
<feature type="active site" description="Nucleophile" evidence="1">
    <location>
        <position position="51"/>
    </location>
</feature>
<feature type="binding site" evidence="1">
    <location>
        <position position="109"/>
    </location>
    <ligand>
        <name>substrate</name>
    </ligand>
</feature>
<proteinExistence type="inferred from homology"/>
<name>TRUA_YERP3</name>
<organism>
    <name type="scientific">Yersinia pseudotuberculosis serotype O:1b (strain IP 31758)</name>
    <dbReference type="NCBI Taxonomy" id="349747"/>
    <lineage>
        <taxon>Bacteria</taxon>
        <taxon>Pseudomonadati</taxon>
        <taxon>Pseudomonadota</taxon>
        <taxon>Gammaproteobacteria</taxon>
        <taxon>Enterobacterales</taxon>
        <taxon>Yersiniaceae</taxon>
        <taxon>Yersinia</taxon>
    </lineage>
</organism>
<sequence length="264" mass="29348">MKIALGIEYNGSRYFGWQRQQEVASVQACLEAALSKVANEPIGVFCAGRTDAGVHATGQVVHFVTSAVRKDAAWTMGVNSHLPADIAVRWVKTVDNDFHARFSATARRYRYIIFSHRYRPAILAQGVTHCYMPLDAEKMERAAQCLLGENDFTSFRAVQCQSRTPWRNVKHVKVTRHGAYIVVDIKANAFVHHMVRNIVGSLIEIGCGNQDVTWMAELLALKDRTRAAATAKADGLYLVSVDYPDHFALPKVPMGPLFLADDEG</sequence>
<dbReference type="EC" id="5.4.99.12" evidence="1"/>
<dbReference type="EMBL" id="CP000720">
    <property type="protein sequence ID" value="ABS49504.1"/>
    <property type="molecule type" value="Genomic_DNA"/>
</dbReference>
<dbReference type="SMR" id="A7FGM1"/>
<dbReference type="KEGG" id="ypi:YpsIP31758_1420"/>
<dbReference type="HOGENOM" id="CLU_014673_0_2_6"/>
<dbReference type="Proteomes" id="UP000002412">
    <property type="component" value="Chromosome"/>
</dbReference>
<dbReference type="GO" id="GO:0003723">
    <property type="term" value="F:RNA binding"/>
    <property type="evidence" value="ECO:0007669"/>
    <property type="project" value="InterPro"/>
</dbReference>
<dbReference type="GO" id="GO:0160147">
    <property type="term" value="F:tRNA pseudouridine(38-40) synthase activity"/>
    <property type="evidence" value="ECO:0007669"/>
    <property type="project" value="UniProtKB-EC"/>
</dbReference>
<dbReference type="GO" id="GO:0031119">
    <property type="term" value="P:tRNA pseudouridine synthesis"/>
    <property type="evidence" value="ECO:0007669"/>
    <property type="project" value="UniProtKB-UniRule"/>
</dbReference>
<dbReference type="CDD" id="cd02570">
    <property type="entry name" value="PseudoU_synth_EcTruA"/>
    <property type="match status" value="1"/>
</dbReference>
<dbReference type="FunFam" id="3.30.70.580:FF:000001">
    <property type="entry name" value="tRNA pseudouridine synthase A"/>
    <property type="match status" value="1"/>
</dbReference>
<dbReference type="FunFam" id="3.30.70.660:FF:000001">
    <property type="entry name" value="tRNA pseudouridine synthase A"/>
    <property type="match status" value="1"/>
</dbReference>
<dbReference type="Gene3D" id="3.30.70.660">
    <property type="entry name" value="Pseudouridine synthase I, catalytic domain, C-terminal subdomain"/>
    <property type="match status" value="1"/>
</dbReference>
<dbReference type="Gene3D" id="3.30.70.580">
    <property type="entry name" value="Pseudouridine synthase I, catalytic domain, N-terminal subdomain"/>
    <property type="match status" value="1"/>
</dbReference>
<dbReference type="HAMAP" id="MF_00171">
    <property type="entry name" value="TruA"/>
    <property type="match status" value="1"/>
</dbReference>
<dbReference type="InterPro" id="IPR020103">
    <property type="entry name" value="PsdUridine_synth_cat_dom_sf"/>
</dbReference>
<dbReference type="InterPro" id="IPR001406">
    <property type="entry name" value="PsdUridine_synth_TruA"/>
</dbReference>
<dbReference type="InterPro" id="IPR020097">
    <property type="entry name" value="PsdUridine_synth_TruA_a/b_dom"/>
</dbReference>
<dbReference type="InterPro" id="IPR020095">
    <property type="entry name" value="PsdUridine_synth_TruA_C"/>
</dbReference>
<dbReference type="InterPro" id="IPR020094">
    <property type="entry name" value="TruA/RsuA/RluB/E/F_N"/>
</dbReference>
<dbReference type="NCBIfam" id="TIGR00071">
    <property type="entry name" value="hisT_truA"/>
    <property type="match status" value="1"/>
</dbReference>
<dbReference type="PANTHER" id="PTHR11142">
    <property type="entry name" value="PSEUDOURIDYLATE SYNTHASE"/>
    <property type="match status" value="1"/>
</dbReference>
<dbReference type="PANTHER" id="PTHR11142:SF0">
    <property type="entry name" value="TRNA PSEUDOURIDINE SYNTHASE-LIKE 1"/>
    <property type="match status" value="1"/>
</dbReference>
<dbReference type="Pfam" id="PF01416">
    <property type="entry name" value="PseudoU_synth_1"/>
    <property type="match status" value="2"/>
</dbReference>
<dbReference type="PIRSF" id="PIRSF001430">
    <property type="entry name" value="tRNA_psdUrid_synth"/>
    <property type="match status" value="1"/>
</dbReference>
<dbReference type="SUPFAM" id="SSF55120">
    <property type="entry name" value="Pseudouridine synthase"/>
    <property type="match status" value="1"/>
</dbReference>